<gene>
    <name evidence="1" type="primary">hemH</name>
    <name type="ordered locus">SG0694</name>
</gene>
<accession>Q2NV56</accession>
<sequence>MSQEKYGVLMVNLGTPEAPTPRAVKRYLAEFLSDKRVVDTPRALWLPLLYGAILPLRSPRVAKLYQSVWMDEGSPLLVYSRRQQQALAASLPDVAVELAMSYGQPALPQAIARLLAQDITRLVILPLYPQYSCSTSAAIWDAVARILTGYRRLPSISFIRDYAAHPAYIAALAASVERAFTRHGRPDRLIISFHGIPQRYAEEGDDYPQRCDVTLQALAAALDYPPEQVMMTFQSRFGRDPWLLPATDETMKSLPSAGVQHVQVICPGFAADCLETLEEIQVQNREIFEHAGGSTFHYIPALNDDAAHVDLLHQLVTAALRPSAPPPAVVSLASF</sequence>
<feature type="chain" id="PRO_1000019372" description="Ferrochelatase">
    <location>
        <begin position="1"/>
        <end position="335"/>
    </location>
</feature>
<feature type="binding site" evidence="1">
    <location>
        <position position="194"/>
    </location>
    <ligand>
        <name>Fe cation</name>
        <dbReference type="ChEBI" id="CHEBI:24875"/>
    </ligand>
</feature>
<feature type="binding site" evidence="1">
    <location>
        <position position="275"/>
    </location>
    <ligand>
        <name>Fe cation</name>
        <dbReference type="ChEBI" id="CHEBI:24875"/>
    </ligand>
</feature>
<dbReference type="EC" id="4.98.1.1" evidence="1"/>
<dbReference type="EMBL" id="AP008232">
    <property type="protein sequence ID" value="BAE73969.1"/>
    <property type="molecule type" value="Genomic_DNA"/>
</dbReference>
<dbReference type="RefSeq" id="WP_011410557.1">
    <property type="nucleotide sequence ID" value="NC_007712.1"/>
</dbReference>
<dbReference type="SMR" id="Q2NV56"/>
<dbReference type="STRING" id="343509.SG0694"/>
<dbReference type="KEGG" id="sgl:SG0694"/>
<dbReference type="eggNOG" id="COG0276">
    <property type="taxonomic scope" value="Bacteria"/>
</dbReference>
<dbReference type="HOGENOM" id="CLU_018884_0_0_6"/>
<dbReference type="OrthoDB" id="9809741at2"/>
<dbReference type="BioCyc" id="SGLO343509:SGP1_RS05900-MONOMER"/>
<dbReference type="UniPathway" id="UPA00252">
    <property type="reaction ID" value="UER00325"/>
</dbReference>
<dbReference type="Proteomes" id="UP000001932">
    <property type="component" value="Chromosome"/>
</dbReference>
<dbReference type="GO" id="GO:0005737">
    <property type="term" value="C:cytoplasm"/>
    <property type="evidence" value="ECO:0007669"/>
    <property type="project" value="UniProtKB-SubCell"/>
</dbReference>
<dbReference type="GO" id="GO:0004325">
    <property type="term" value="F:ferrochelatase activity"/>
    <property type="evidence" value="ECO:0007669"/>
    <property type="project" value="UniProtKB-UniRule"/>
</dbReference>
<dbReference type="GO" id="GO:0046872">
    <property type="term" value="F:metal ion binding"/>
    <property type="evidence" value="ECO:0007669"/>
    <property type="project" value="UniProtKB-KW"/>
</dbReference>
<dbReference type="GO" id="GO:0006783">
    <property type="term" value="P:heme biosynthetic process"/>
    <property type="evidence" value="ECO:0007669"/>
    <property type="project" value="UniProtKB-UniRule"/>
</dbReference>
<dbReference type="CDD" id="cd00419">
    <property type="entry name" value="Ferrochelatase_C"/>
    <property type="match status" value="1"/>
</dbReference>
<dbReference type="CDD" id="cd03411">
    <property type="entry name" value="Ferrochelatase_N"/>
    <property type="match status" value="1"/>
</dbReference>
<dbReference type="FunFam" id="3.40.50.1400:FF:000004">
    <property type="entry name" value="Ferrochelatase"/>
    <property type="match status" value="1"/>
</dbReference>
<dbReference type="Gene3D" id="3.40.50.1400">
    <property type="match status" value="2"/>
</dbReference>
<dbReference type="HAMAP" id="MF_00323">
    <property type="entry name" value="Ferrochelatase"/>
    <property type="match status" value="1"/>
</dbReference>
<dbReference type="InterPro" id="IPR001015">
    <property type="entry name" value="Ferrochelatase"/>
</dbReference>
<dbReference type="InterPro" id="IPR019772">
    <property type="entry name" value="Ferrochelatase_AS"/>
</dbReference>
<dbReference type="InterPro" id="IPR033644">
    <property type="entry name" value="Ferrochelatase_C"/>
</dbReference>
<dbReference type="InterPro" id="IPR033659">
    <property type="entry name" value="Ferrochelatase_N"/>
</dbReference>
<dbReference type="NCBIfam" id="TIGR00109">
    <property type="entry name" value="hemH"/>
    <property type="match status" value="1"/>
</dbReference>
<dbReference type="PANTHER" id="PTHR11108">
    <property type="entry name" value="FERROCHELATASE"/>
    <property type="match status" value="1"/>
</dbReference>
<dbReference type="PANTHER" id="PTHR11108:SF1">
    <property type="entry name" value="FERROCHELATASE, MITOCHONDRIAL"/>
    <property type="match status" value="1"/>
</dbReference>
<dbReference type="Pfam" id="PF00762">
    <property type="entry name" value="Ferrochelatase"/>
    <property type="match status" value="1"/>
</dbReference>
<dbReference type="SUPFAM" id="SSF53800">
    <property type="entry name" value="Chelatase"/>
    <property type="match status" value="1"/>
</dbReference>
<dbReference type="PROSITE" id="PS00534">
    <property type="entry name" value="FERROCHELATASE"/>
    <property type="match status" value="1"/>
</dbReference>
<reference key="1">
    <citation type="journal article" date="2006" name="Genome Res.">
        <title>Massive genome erosion and functional adaptations provide insights into the symbiotic lifestyle of Sodalis glossinidius in the tsetse host.</title>
        <authorList>
            <person name="Toh H."/>
            <person name="Weiss B.L."/>
            <person name="Perkin S.A.H."/>
            <person name="Yamashita A."/>
            <person name="Oshima K."/>
            <person name="Hattori M."/>
            <person name="Aksoy S."/>
        </authorList>
    </citation>
    <scope>NUCLEOTIDE SEQUENCE [LARGE SCALE GENOMIC DNA]</scope>
    <source>
        <strain>morsitans</strain>
    </source>
</reference>
<comment type="function">
    <text evidence="1">Catalyzes the ferrous insertion into protoporphyrin IX.</text>
</comment>
<comment type="catalytic activity">
    <reaction evidence="1">
        <text>heme b + 2 H(+) = protoporphyrin IX + Fe(2+)</text>
        <dbReference type="Rhea" id="RHEA:22584"/>
        <dbReference type="ChEBI" id="CHEBI:15378"/>
        <dbReference type="ChEBI" id="CHEBI:29033"/>
        <dbReference type="ChEBI" id="CHEBI:57306"/>
        <dbReference type="ChEBI" id="CHEBI:60344"/>
        <dbReference type="EC" id="4.98.1.1"/>
    </reaction>
</comment>
<comment type="pathway">
    <text evidence="1">Porphyrin-containing compound metabolism; protoheme biosynthesis; protoheme from protoporphyrin-IX: step 1/1.</text>
</comment>
<comment type="subcellular location">
    <subcellularLocation>
        <location evidence="1">Cytoplasm</location>
    </subcellularLocation>
</comment>
<comment type="similarity">
    <text evidence="1">Belongs to the ferrochelatase family.</text>
</comment>
<protein>
    <recommendedName>
        <fullName evidence="1">Ferrochelatase</fullName>
        <ecNumber evidence="1">4.98.1.1</ecNumber>
    </recommendedName>
    <alternativeName>
        <fullName evidence="1">Heme synthase</fullName>
    </alternativeName>
    <alternativeName>
        <fullName evidence="1">Protoheme ferro-lyase</fullName>
    </alternativeName>
</protein>
<proteinExistence type="inferred from homology"/>
<evidence type="ECO:0000255" key="1">
    <source>
        <dbReference type="HAMAP-Rule" id="MF_00323"/>
    </source>
</evidence>
<organism>
    <name type="scientific">Sodalis glossinidius (strain morsitans)</name>
    <dbReference type="NCBI Taxonomy" id="343509"/>
    <lineage>
        <taxon>Bacteria</taxon>
        <taxon>Pseudomonadati</taxon>
        <taxon>Pseudomonadota</taxon>
        <taxon>Gammaproteobacteria</taxon>
        <taxon>Enterobacterales</taxon>
        <taxon>Bruguierivoracaceae</taxon>
        <taxon>Sodalis</taxon>
    </lineage>
</organism>
<keyword id="KW-0963">Cytoplasm</keyword>
<keyword id="KW-0350">Heme biosynthesis</keyword>
<keyword id="KW-0408">Iron</keyword>
<keyword id="KW-0456">Lyase</keyword>
<keyword id="KW-0479">Metal-binding</keyword>
<keyword id="KW-0627">Porphyrin biosynthesis</keyword>
<name>HEMH_SODGM</name>